<evidence type="ECO:0000255" key="1">
    <source>
        <dbReference type="HAMAP-Rule" id="MF_00251"/>
    </source>
</evidence>
<evidence type="ECO:0000305" key="2"/>
<proteinExistence type="inferred from homology"/>
<dbReference type="EMBL" id="CP000034">
    <property type="protein sequence ID" value="ABB63453.1"/>
    <property type="molecule type" value="Genomic_DNA"/>
</dbReference>
<dbReference type="RefSeq" id="WP_000868187.1">
    <property type="nucleotide sequence ID" value="NC_007606.1"/>
</dbReference>
<dbReference type="RefSeq" id="YP_404944.1">
    <property type="nucleotide sequence ID" value="NC_007606.1"/>
</dbReference>
<dbReference type="SMR" id="Q32B52"/>
<dbReference type="STRING" id="300267.SDY_3475"/>
<dbReference type="EnsemblBacteria" id="ABB63453">
    <property type="protein sequence ID" value="ABB63453"/>
    <property type="gene ID" value="SDY_3475"/>
</dbReference>
<dbReference type="GeneID" id="98390421"/>
<dbReference type="KEGG" id="sdy:SDY_3475"/>
<dbReference type="PATRIC" id="fig|300267.13.peg.4128"/>
<dbReference type="HOGENOM" id="CLU_135723_6_2_6"/>
<dbReference type="PRO" id="PR:Q32B52"/>
<dbReference type="Proteomes" id="UP000002716">
    <property type="component" value="Chromosome"/>
</dbReference>
<dbReference type="GO" id="GO:0005737">
    <property type="term" value="C:cytoplasm"/>
    <property type="evidence" value="ECO:0007669"/>
    <property type="project" value="UniProtKB-ARBA"/>
</dbReference>
<dbReference type="GO" id="GO:1990904">
    <property type="term" value="C:ribonucleoprotein complex"/>
    <property type="evidence" value="ECO:0007669"/>
    <property type="project" value="UniProtKB-KW"/>
</dbReference>
<dbReference type="GO" id="GO:0005840">
    <property type="term" value="C:ribosome"/>
    <property type="evidence" value="ECO:0007669"/>
    <property type="project" value="UniProtKB-KW"/>
</dbReference>
<dbReference type="GO" id="GO:0003735">
    <property type="term" value="F:structural constituent of ribosome"/>
    <property type="evidence" value="ECO:0007669"/>
    <property type="project" value="InterPro"/>
</dbReference>
<dbReference type="GO" id="GO:0006412">
    <property type="term" value="P:translation"/>
    <property type="evidence" value="ECO:0007669"/>
    <property type="project" value="UniProtKB-UniRule"/>
</dbReference>
<dbReference type="HAMAP" id="MF_00251">
    <property type="entry name" value="Ribosomal_bL36"/>
    <property type="match status" value="1"/>
</dbReference>
<dbReference type="InterPro" id="IPR000473">
    <property type="entry name" value="Ribosomal_bL36"/>
</dbReference>
<dbReference type="InterPro" id="IPR035977">
    <property type="entry name" value="Ribosomal_bL36_sp"/>
</dbReference>
<dbReference type="NCBIfam" id="TIGR01022">
    <property type="entry name" value="rpmJ_bact"/>
    <property type="match status" value="1"/>
</dbReference>
<dbReference type="PANTHER" id="PTHR42888">
    <property type="entry name" value="50S RIBOSOMAL PROTEIN L36, CHLOROPLASTIC"/>
    <property type="match status" value="1"/>
</dbReference>
<dbReference type="PANTHER" id="PTHR42888:SF1">
    <property type="entry name" value="LARGE RIBOSOMAL SUBUNIT PROTEIN BL36C"/>
    <property type="match status" value="1"/>
</dbReference>
<dbReference type="Pfam" id="PF00444">
    <property type="entry name" value="Ribosomal_L36"/>
    <property type="match status" value="1"/>
</dbReference>
<dbReference type="SUPFAM" id="SSF57840">
    <property type="entry name" value="Ribosomal protein L36"/>
    <property type="match status" value="1"/>
</dbReference>
<dbReference type="PROSITE" id="PS00828">
    <property type="entry name" value="RIBOSOMAL_L36"/>
    <property type="match status" value="1"/>
</dbReference>
<organism>
    <name type="scientific">Shigella dysenteriae serotype 1 (strain Sd197)</name>
    <dbReference type="NCBI Taxonomy" id="300267"/>
    <lineage>
        <taxon>Bacteria</taxon>
        <taxon>Pseudomonadati</taxon>
        <taxon>Pseudomonadota</taxon>
        <taxon>Gammaproteobacteria</taxon>
        <taxon>Enterobacterales</taxon>
        <taxon>Enterobacteriaceae</taxon>
        <taxon>Shigella</taxon>
    </lineage>
</organism>
<keyword id="KW-1185">Reference proteome</keyword>
<keyword id="KW-0687">Ribonucleoprotein</keyword>
<keyword id="KW-0689">Ribosomal protein</keyword>
<comment type="similarity">
    <text evidence="1">Belongs to the bacterial ribosomal protein bL36 family.</text>
</comment>
<gene>
    <name evidence="1" type="primary">rpmJ</name>
    <name type="ordered locus">SDY_3475</name>
</gene>
<sequence>MKVRASVKKLCRNCKIVKRDGVIRVICSAEPKHKQRQG</sequence>
<accession>Q32B52</accession>
<feature type="chain" id="PRO_0000302297" description="Large ribosomal subunit protein bL36">
    <location>
        <begin position="1"/>
        <end position="38"/>
    </location>
</feature>
<protein>
    <recommendedName>
        <fullName evidence="1">Large ribosomal subunit protein bL36</fullName>
    </recommendedName>
    <alternativeName>
        <fullName evidence="2">50S ribosomal protein L36</fullName>
    </alternativeName>
</protein>
<reference key="1">
    <citation type="journal article" date="2005" name="Nucleic Acids Res.">
        <title>Genome dynamics and diversity of Shigella species, the etiologic agents of bacillary dysentery.</title>
        <authorList>
            <person name="Yang F."/>
            <person name="Yang J."/>
            <person name="Zhang X."/>
            <person name="Chen L."/>
            <person name="Jiang Y."/>
            <person name="Yan Y."/>
            <person name="Tang X."/>
            <person name="Wang J."/>
            <person name="Xiong Z."/>
            <person name="Dong J."/>
            <person name="Xue Y."/>
            <person name="Zhu Y."/>
            <person name="Xu X."/>
            <person name="Sun L."/>
            <person name="Chen S."/>
            <person name="Nie H."/>
            <person name="Peng J."/>
            <person name="Xu J."/>
            <person name="Wang Y."/>
            <person name="Yuan Z."/>
            <person name="Wen Y."/>
            <person name="Yao Z."/>
            <person name="Shen Y."/>
            <person name="Qiang B."/>
            <person name="Hou Y."/>
            <person name="Yu J."/>
            <person name="Jin Q."/>
        </authorList>
    </citation>
    <scope>NUCLEOTIDE SEQUENCE [LARGE SCALE GENOMIC DNA]</scope>
    <source>
        <strain>Sd197</strain>
    </source>
</reference>
<name>RL36_SHIDS</name>